<dbReference type="EC" id="3.1.3.11" evidence="1"/>
<dbReference type="EMBL" id="CP000931">
    <property type="protein sequence ID" value="ABZ75359.1"/>
    <property type="molecule type" value="Genomic_DNA"/>
</dbReference>
<dbReference type="RefSeq" id="WP_012275913.1">
    <property type="nucleotide sequence ID" value="NC_010334.1"/>
</dbReference>
<dbReference type="SMR" id="B0TTL6"/>
<dbReference type="STRING" id="458817.Shal_0784"/>
<dbReference type="KEGG" id="shl:Shal_0784"/>
<dbReference type="eggNOG" id="COG0158">
    <property type="taxonomic scope" value="Bacteria"/>
</dbReference>
<dbReference type="HOGENOM" id="CLU_039977_0_0_6"/>
<dbReference type="OrthoDB" id="9806756at2"/>
<dbReference type="UniPathway" id="UPA00138"/>
<dbReference type="Proteomes" id="UP000001317">
    <property type="component" value="Chromosome"/>
</dbReference>
<dbReference type="GO" id="GO:0005829">
    <property type="term" value="C:cytosol"/>
    <property type="evidence" value="ECO:0007669"/>
    <property type="project" value="TreeGrafter"/>
</dbReference>
<dbReference type="GO" id="GO:0042132">
    <property type="term" value="F:fructose 1,6-bisphosphate 1-phosphatase activity"/>
    <property type="evidence" value="ECO:0007669"/>
    <property type="project" value="UniProtKB-UniRule"/>
</dbReference>
<dbReference type="GO" id="GO:0000287">
    <property type="term" value="F:magnesium ion binding"/>
    <property type="evidence" value="ECO:0007669"/>
    <property type="project" value="UniProtKB-UniRule"/>
</dbReference>
<dbReference type="GO" id="GO:0030388">
    <property type="term" value="P:fructose 1,6-bisphosphate metabolic process"/>
    <property type="evidence" value="ECO:0007669"/>
    <property type="project" value="TreeGrafter"/>
</dbReference>
<dbReference type="GO" id="GO:0006002">
    <property type="term" value="P:fructose 6-phosphate metabolic process"/>
    <property type="evidence" value="ECO:0007669"/>
    <property type="project" value="TreeGrafter"/>
</dbReference>
<dbReference type="GO" id="GO:0006000">
    <property type="term" value="P:fructose metabolic process"/>
    <property type="evidence" value="ECO:0007669"/>
    <property type="project" value="TreeGrafter"/>
</dbReference>
<dbReference type="GO" id="GO:0006094">
    <property type="term" value="P:gluconeogenesis"/>
    <property type="evidence" value="ECO:0007669"/>
    <property type="project" value="UniProtKB-UniRule"/>
</dbReference>
<dbReference type="GO" id="GO:0005986">
    <property type="term" value="P:sucrose biosynthetic process"/>
    <property type="evidence" value="ECO:0007669"/>
    <property type="project" value="TreeGrafter"/>
</dbReference>
<dbReference type="CDD" id="cd00354">
    <property type="entry name" value="FBPase"/>
    <property type="match status" value="1"/>
</dbReference>
<dbReference type="FunFam" id="3.40.190.80:FF:000011">
    <property type="entry name" value="Fructose-1,6-bisphosphatase class 1"/>
    <property type="match status" value="1"/>
</dbReference>
<dbReference type="Gene3D" id="3.40.190.80">
    <property type="match status" value="1"/>
</dbReference>
<dbReference type="Gene3D" id="3.30.540.10">
    <property type="entry name" value="Fructose-1,6-Bisphosphatase, subunit A, domain 1"/>
    <property type="match status" value="1"/>
</dbReference>
<dbReference type="HAMAP" id="MF_01855">
    <property type="entry name" value="FBPase_class1"/>
    <property type="match status" value="1"/>
</dbReference>
<dbReference type="InterPro" id="IPR044015">
    <property type="entry name" value="FBPase_C_dom"/>
</dbReference>
<dbReference type="InterPro" id="IPR000146">
    <property type="entry name" value="FBPase_class-1"/>
</dbReference>
<dbReference type="InterPro" id="IPR033391">
    <property type="entry name" value="FBPase_N"/>
</dbReference>
<dbReference type="InterPro" id="IPR028343">
    <property type="entry name" value="FBPtase"/>
</dbReference>
<dbReference type="NCBIfam" id="NF006779">
    <property type="entry name" value="PRK09293.1-3"/>
    <property type="match status" value="1"/>
</dbReference>
<dbReference type="NCBIfam" id="NF006780">
    <property type="entry name" value="PRK09293.1-4"/>
    <property type="match status" value="1"/>
</dbReference>
<dbReference type="PANTHER" id="PTHR11556">
    <property type="entry name" value="FRUCTOSE-1,6-BISPHOSPHATASE-RELATED"/>
    <property type="match status" value="1"/>
</dbReference>
<dbReference type="PANTHER" id="PTHR11556:SF35">
    <property type="entry name" value="SEDOHEPTULOSE-1,7-BISPHOSPHATASE, CHLOROPLASTIC"/>
    <property type="match status" value="1"/>
</dbReference>
<dbReference type="Pfam" id="PF00316">
    <property type="entry name" value="FBPase"/>
    <property type="match status" value="1"/>
</dbReference>
<dbReference type="Pfam" id="PF18913">
    <property type="entry name" value="FBPase_C"/>
    <property type="match status" value="1"/>
</dbReference>
<dbReference type="PIRSF" id="PIRSF500210">
    <property type="entry name" value="FBPtase"/>
    <property type="match status" value="1"/>
</dbReference>
<dbReference type="PIRSF" id="PIRSF000904">
    <property type="entry name" value="FBPtase_SBPase"/>
    <property type="match status" value="1"/>
</dbReference>
<dbReference type="PRINTS" id="PR00115">
    <property type="entry name" value="F16BPHPHTASE"/>
</dbReference>
<dbReference type="SUPFAM" id="SSF56655">
    <property type="entry name" value="Carbohydrate phosphatase"/>
    <property type="match status" value="1"/>
</dbReference>
<keyword id="KW-0119">Carbohydrate metabolism</keyword>
<keyword id="KW-0963">Cytoplasm</keyword>
<keyword id="KW-0378">Hydrolase</keyword>
<keyword id="KW-0460">Magnesium</keyword>
<keyword id="KW-0479">Metal-binding</keyword>
<feature type="chain" id="PRO_0000364705" description="Fructose-1,6-bisphosphatase class 1">
    <location>
        <begin position="1"/>
        <end position="329"/>
    </location>
</feature>
<feature type="binding site" evidence="1">
    <location>
        <position position="84"/>
    </location>
    <ligand>
        <name>Mg(2+)</name>
        <dbReference type="ChEBI" id="CHEBI:18420"/>
        <label>1</label>
    </ligand>
</feature>
<feature type="binding site" evidence="1">
    <location>
        <position position="103"/>
    </location>
    <ligand>
        <name>Mg(2+)</name>
        <dbReference type="ChEBI" id="CHEBI:18420"/>
        <label>1</label>
    </ligand>
</feature>
<feature type="binding site" evidence="1">
    <location>
        <position position="103"/>
    </location>
    <ligand>
        <name>Mg(2+)</name>
        <dbReference type="ChEBI" id="CHEBI:18420"/>
        <label>2</label>
    </ligand>
</feature>
<feature type="binding site" evidence="1">
    <location>
        <position position="105"/>
    </location>
    <ligand>
        <name>Mg(2+)</name>
        <dbReference type="ChEBI" id="CHEBI:18420"/>
        <label>1</label>
    </ligand>
</feature>
<feature type="binding site" evidence="1">
    <location>
        <begin position="106"/>
        <end position="109"/>
    </location>
    <ligand>
        <name>substrate</name>
    </ligand>
</feature>
<feature type="binding site" evidence="1">
    <location>
        <position position="106"/>
    </location>
    <ligand>
        <name>Mg(2+)</name>
        <dbReference type="ChEBI" id="CHEBI:18420"/>
        <label>2</label>
    </ligand>
</feature>
<feature type="binding site" evidence="1">
    <location>
        <position position="196"/>
    </location>
    <ligand>
        <name>substrate</name>
    </ligand>
</feature>
<feature type="binding site" evidence="1">
    <location>
        <position position="262"/>
    </location>
    <ligand>
        <name>substrate</name>
    </ligand>
</feature>
<feature type="binding site" evidence="1">
    <location>
        <position position="268"/>
    </location>
    <ligand>
        <name>Mg(2+)</name>
        <dbReference type="ChEBI" id="CHEBI:18420"/>
        <label>2</label>
    </ligand>
</feature>
<protein>
    <recommendedName>
        <fullName evidence="1">Fructose-1,6-bisphosphatase class 1</fullName>
        <shortName evidence="1">FBPase class 1</shortName>
        <ecNumber evidence="1">3.1.3.11</ecNumber>
    </recommendedName>
    <alternativeName>
        <fullName evidence="1">D-fructose-1,6-bisphosphate 1-phosphohydrolase class 1</fullName>
    </alternativeName>
</protein>
<evidence type="ECO:0000255" key="1">
    <source>
        <dbReference type="HAMAP-Rule" id="MF_01855"/>
    </source>
</evidence>
<proteinExistence type="inferred from homology"/>
<gene>
    <name evidence="1" type="primary">fbp</name>
    <name type="ordered locus">Shal_0784</name>
</gene>
<name>F16PA_SHEHH</name>
<accession>B0TTL6</accession>
<reference key="1">
    <citation type="submission" date="2008-01" db="EMBL/GenBank/DDBJ databases">
        <title>Complete sequence of Shewanella halifaxensis HAW-EB4.</title>
        <authorList>
            <consortium name="US DOE Joint Genome Institute"/>
            <person name="Copeland A."/>
            <person name="Lucas S."/>
            <person name="Lapidus A."/>
            <person name="Glavina del Rio T."/>
            <person name="Dalin E."/>
            <person name="Tice H."/>
            <person name="Bruce D."/>
            <person name="Goodwin L."/>
            <person name="Pitluck S."/>
            <person name="Sims D."/>
            <person name="Brettin T."/>
            <person name="Detter J.C."/>
            <person name="Han C."/>
            <person name="Kuske C.R."/>
            <person name="Schmutz J."/>
            <person name="Larimer F."/>
            <person name="Land M."/>
            <person name="Hauser L."/>
            <person name="Kyrpides N."/>
            <person name="Kim E."/>
            <person name="Zhao J.-S."/>
            <person name="Richardson P."/>
        </authorList>
    </citation>
    <scope>NUCLEOTIDE SEQUENCE [LARGE SCALE GENOMIC DNA]</scope>
    <source>
        <strain>HAW-EB4</strain>
    </source>
</reference>
<comment type="catalytic activity">
    <reaction evidence="1">
        <text>beta-D-fructose 1,6-bisphosphate + H2O = beta-D-fructose 6-phosphate + phosphate</text>
        <dbReference type="Rhea" id="RHEA:11064"/>
        <dbReference type="ChEBI" id="CHEBI:15377"/>
        <dbReference type="ChEBI" id="CHEBI:32966"/>
        <dbReference type="ChEBI" id="CHEBI:43474"/>
        <dbReference type="ChEBI" id="CHEBI:57634"/>
        <dbReference type="EC" id="3.1.3.11"/>
    </reaction>
</comment>
<comment type="cofactor">
    <cofactor evidence="1">
        <name>Mg(2+)</name>
        <dbReference type="ChEBI" id="CHEBI:18420"/>
    </cofactor>
    <text evidence="1">Binds 2 magnesium ions per subunit.</text>
</comment>
<comment type="pathway">
    <text evidence="1">Carbohydrate biosynthesis; gluconeogenesis.</text>
</comment>
<comment type="subunit">
    <text evidence="1">Homotetramer.</text>
</comment>
<comment type="subcellular location">
    <subcellularLocation>
        <location evidence="1">Cytoplasm</location>
    </subcellularLocation>
</comment>
<comment type="similarity">
    <text evidence="1">Belongs to the FBPase class 1 family.</text>
</comment>
<sequence>MQTLAENLTSQAISPTLEKLILTLANTSKEISHAVRHGALAGVLGATEQENVQGETQKKLDIITNDMLKDALKADGTVRGIASEEEDYVVEADANGEFLVCFDPLDGSSNIDINSLVGTIFSVLPAPAGELTEKSFLQAGHNQVAAGYVLYGPSTMLALTTGQGVQLFTLNPETNQFLLTNAAMAVSKDTGEFAINMSNQRFWEAPMQTYISDLLLGKIGPREKSFNMRWIAAMVGDVHRVLCRGGIFTYPTDNKNPEKPYKLRLMYEANPMAFLVEQAGGKASTGYETIMDIEPTAIHQRVAVILGSANEVDACLEYHGIDYSEEPAL</sequence>
<organism>
    <name type="scientific">Shewanella halifaxensis (strain HAW-EB4)</name>
    <dbReference type="NCBI Taxonomy" id="458817"/>
    <lineage>
        <taxon>Bacteria</taxon>
        <taxon>Pseudomonadati</taxon>
        <taxon>Pseudomonadota</taxon>
        <taxon>Gammaproteobacteria</taxon>
        <taxon>Alteromonadales</taxon>
        <taxon>Shewanellaceae</taxon>
        <taxon>Shewanella</taxon>
    </lineage>
</organism>